<proteinExistence type="evidence at transcript level"/>
<feature type="signal peptide" evidence="3">
    <location>
        <begin position="1"/>
        <end position="22"/>
    </location>
</feature>
<feature type="propeptide" id="PRO_0000438240" evidence="3">
    <location>
        <begin position="23"/>
        <end position="267"/>
    </location>
</feature>
<feature type="chain" id="PRO_5004325050" description="Growth/differentiation factor 8" evidence="3">
    <location>
        <begin position="268"/>
        <end position="376"/>
    </location>
</feature>
<feature type="disulfide bond" evidence="1">
    <location>
        <begin position="273"/>
        <end position="283"/>
    </location>
</feature>
<feature type="disulfide bond" evidence="1">
    <location>
        <begin position="282"/>
        <end position="341"/>
    </location>
</feature>
<feature type="disulfide bond" evidence="1">
    <location>
        <begin position="310"/>
        <end position="373"/>
    </location>
</feature>
<feature type="disulfide bond" evidence="1">
    <location>
        <begin position="314"/>
        <end position="375"/>
    </location>
</feature>
<feature type="disulfide bond" description="Interchain" evidence="1">
    <location>
        <position position="340"/>
    </location>
</feature>
<gene>
    <name evidence="7" type="primary">gdf-8</name>
</gene>
<organism evidence="8">
    <name type="scientific">Oreochromis mossambicus</name>
    <name type="common">Mozambique tilapia</name>
    <name type="synonym">Tilapia mossambica</name>
    <dbReference type="NCBI Taxonomy" id="8127"/>
    <lineage>
        <taxon>Eukaryota</taxon>
        <taxon>Metazoa</taxon>
        <taxon>Chordata</taxon>
        <taxon>Craniata</taxon>
        <taxon>Vertebrata</taxon>
        <taxon>Euteleostomi</taxon>
        <taxon>Actinopterygii</taxon>
        <taxon>Neopterygii</taxon>
        <taxon>Teleostei</taxon>
        <taxon>Neoteleostei</taxon>
        <taxon>Acanthomorphata</taxon>
        <taxon>Ovalentaria</taxon>
        <taxon>Cichlomorphae</taxon>
        <taxon>Cichliformes</taxon>
        <taxon>Cichlidae</taxon>
        <taxon>African cichlids</taxon>
        <taxon>Pseudocrenilabrinae</taxon>
        <taxon>Oreochromini</taxon>
        <taxon>Oreochromis</taxon>
    </lineage>
</organism>
<keyword id="KW-0165">Cleavage on pair of basic residues</keyword>
<keyword id="KW-0202">Cytokine</keyword>
<keyword id="KW-1015">Disulfide bond</keyword>
<keyword id="KW-0339">Growth factor</keyword>
<keyword id="KW-0964">Secreted</keyword>
<keyword id="KW-0732">Signal</keyword>
<evidence type="ECO:0000250" key="1">
    <source>
        <dbReference type="UniProtKB" id="O08689"/>
    </source>
</evidence>
<evidence type="ECO:0000250" key="2">
    <source>
        <dbReference type="UniProtKB" id="O42222"/>
    </source>
</evidence>
<evidence type="ECO:0000255" key="3"/>
<evidence type="ECO:0000255" key="4">
    <source>
        <dbReference type="RuleBase" id="RU000354"/>
    </source>
</evidence>
<evidence type="ECO:0000269" key="5">
    <source>
    </source>
</evidence>
<evidence type="ECO:0000303" key="6">
    <source>
    </source>
</evidence>
<evidence type="ECO:0000305" key="7"/>
<evidence type="ECO:0000312" key="8">
    <source>
        <dbReference type="EMBL" id="AAK28706.1"/>
    </source>
</evidence>
<sequence>MHLSQIVLYLSLLIALGPVVLSDQEAHQQPSVSTPVDTDQCATCEVRQQIKTMRLNAIKSQILSKLRMKEAPNISREIVKQLLPKAPPLQQLLDQYDVLGDDNREEVLEDDDEHATTETIVMVATEPDPAVQVDGQPKCCFFSITQKFQASRVVRAQLWVHLRPSEEVTTVFLQISRLIPVTDGNRHIRSRSLKIDVNPGPASWQSIDVKQVLTVWLRQPETNWGIEINAFDSRGNDLAVTSAEPGEEGLQPFMEVKISEGPRRARRDSGLDCDENSPESRCCRYPLTVDFEDFGWDWIIAPKRYKANYCSGECEYMHLQKYPHTHLVNKANPRGTAGPCCTPTKMSPINMLYFNRKEQIIYGKIPSMVVDRCGCS</sequence>
<accession>Q98TB4</accession>
<comment type="function">
    <text evidence="2">Acts specifically as a negative regulator of skeletal muscle growth.</text>
</comment>
<comment type="subunit">
    <text evidence="1">Homodimer; disulfide-linked.</text>
</comment>
<comment type="subcellular location">
    <subcellularLocation>
        <location evidence="3 5">Secreted</location>
    </subcellularLocation>
</comment>
<comment type="tissue specificity">
    <text evidence="5">Highly expressed in muscle. Also expressed in other tissues such as eye, gill, ovary, gut and brain. Very low level detected in testis. Not expressed in liver, kidney, stomach or heart.</text>
</comment>
<comment type="developmental stage">
    <text evidence="5">Expression increases rapidly in whole body during embryonic and early larval development. However, the rate of expression decreases to plateau during yolk sac absorption. Expression not detected in fertilized oocytes and in prehatching larvae with eye spots. First detected in post-hatching larvae and peaks soon thereafter with the appearance of muscle activity coinciding with early myogenesis.</text>
</comment>
<comment type="similarity">
    <text evidence="3 4 7">Belongs to the TGF-beta family.</text>
</comment>
<name>GDF8_OREMO</name>
<reference evidence="8" key="1">
    <citation type="journal article" date="2001" name="Endocrinology">
        <title>Isolation and characterization of myostatin complementary deoxyribonucleic acid clones from two commercially important fish: Oreochromis mossambicus and Morone chrysops.</title>
        <authorList>
            <person name="Rodgers B.D."/>
            <person name="Weber G.M."/>
            <person name="Sullivan C.V."/>
            <person name="Levine M.A."/>
        </authorList>
    </citation>
    <scope>NUCLEOTIDE SEQUENCE [MRNA]</scope>
    <scope>SUBCELLULAR LOCATION</scope>
    <scope>TISSUE SPECIFICITY</scope>
    <scope>DEVELOPMENTAL STAGE</scope>
    <scope>PHYLOGENETIC ANALYSIS</scope>
    <source>
        <tissue evidence="8">Skeletal muscle</tissue>
    </source>
</reference>
<protein>
    <recommendedName>
        <fullName evidence="7">Growth/differentiation factor 8</fullName>
    </recommendedName>
    <alternativeName>
        <fullName evidence="6">Myostatin</fullName>
        <shortName evidence="6">MSTN</shortName>
    </alternativeName>
</protein>
<dbReference type="EMBL" id="AF197193">
    <property type="protein sequence ID" value="AAK28706.1"/>
    <property type="molecule type" value="mRNA"/>
</dbReference>
<dbReference type="SMR" id="Q98TB4"/>
<dbReference type="GO" id="GO:0005615">
    <property type="term" value="C:extracellular space"/>
    <property type="evidence" value="ECO:0007669"/>
    <property type="project" value="UniProtKB-KW"/>
</dbReference>
<dbReference type="GO" id="GO:0005125">
    <property type="term" value="F:cytokine activity"/>
    <property type="evidence" value="ECO:0007669"/>
    <property type="project" value="UniProtKB-KW"/>
</dbReference>
<dbReference type="GO" id="GO:0008083">
    <property type="term" value="F:growth factor activity"/>
    <property type="evidence" value="ECO:0007669"/>
    <property type="project" value="UniProtKB-KW"/>
</dbReference>
<dbReference type="CDD" id="cd19388">
    <property type="entry name" value="TGF_beta_GDF8"/>
    <property type="match status" value="1"/>
</dbReference>
<dbReference type="FunFam" id="2.60.120.970:FF:000003">
    <property type="entry name" value="Growth differentiation factor 11"/>
    <property type="match status" value="1"/>
</dbReference>
<dbReference type="FunFam" id="2.10.90.10:FF:000006">
    <property type="entry name" value="growth/differentiation factor 8"/>
    <property type="match status" value="1"/>
</dbReference>
<dbReference type="Gene3D" id="2.60.120.970">
    <property type="match status" value="1"/>
</dbReference>
<dbReference type="Gene3D" id="2.10.90.10">
    <property type="entry name" value="Cystine-knot cytokines"/>
    <property type="match status" value="1"/>
</dbReference>
<dbReference type="InterPro" id="IPR029034">
    <property type="entry name" value="Cystine-knot_cytokine"/>
</dbReference>
<dbReference type="InterPro" id="IPR001839">
    <property type="entry name" value="TGF-b_C"/>
</dbReference>
<dbReference type="InterPro" id="IPR001111">
    <property type="entry name" value="TGF-b_propeptide"/>
</dbReference>
<dbReference type="InterPro" id="IPR015615">
    <property type="entry name" value="TGF-beta-rel"/>
</dbReference>
<dbReference type="InterPro" id="IPR017948">
    <property type="entry name" value="TGFb_CS"/>
</dbReference>
<dbReference type="PANTHER" id="PTHR11848:SF150">
    <property type="entry name" value="GROWTH_DIFFERENTIATION FACTOR 8"/>
    <property type="match status" value="1"/>
</dbReference>
<dbReference type="PANTHER" id="PTHR11848">
    <property type="entry name" value="TGF-BETA FAMILY"/>
    <property type="match status" value="1"/>
</dbReference>
<dbReference type="Pfam" id="PF00019">
    <property type="entry name" value="TGF_beta"/>
    <property type="match status" value="1"/>
</dbReference>
<dbReference type="Pfam" id="PF00688">
    <property type="entry name" value="TGFb_propeptide"/>
    <property type="match status" value="1"/>
</dbReference>
<dbReference type="SMART" id="SM00204">
    <property type="entry name" value="TGFB"/>
    <property type="match status" value="1"/>
</dbReference>
<dbReference type="SUPFAM" id="SSF57501">
    <property type="entry name" value="Cystine-knot cytokines"/>
    <property type="match status" value="1"/>
</dbReference>
<dbReference type="PROSITE" id="PS00250">
    <property type="entry name" value="TGF_BETA_1"/>
    <property type="match status" value="1"/>
</dbReference>
<dbReference type="PROSITE" id="PS51362">
    <property type="entry name" value="TGF_BETA_2"/>
    <property type="match status" value="1"/>
</dbReference>